<dbReference type="EMBL" id="CP000026">
    <property type="protein sequence ID" value="AAV77021.1"/>
    <property type="molecule type" value="Genomic_DNA"/>
</dbReference>
<dbReference type="RefSeq" id="WP_000457328.1">
    <property type="nucleotide sequence ID" value="NC_006511.1"/>
</dbReference>
<dbReference type="SMR" id="Q5PNL7"/>
<dbReference type="KEGG" id="spt:SPA1050"/>
<dbReference type="HOGENOM" id="CLU_185263_0_0_6"/>
<dbReference type="Proteomes" id="UP000008185">
    <property type="component" value="Chromosome"/>
</dbReference>
<dbReference type="HAMAP" id="MF_00507">
    <property type="entry name" value="UPF0181"/>
    <property type="match status" value="1"/>
</dbReference>
<dbReference type="InterPro" id="IPR005371">
    <property type="entry name" value="UPF0181"/>
</dbReference>
<dbReference type="NCBIfam" id="NF003476">
    <property type="entry name" value="PRK05114.1"/>
    <property type="match status" value="1"/>
</dbReference>
<dbReference type="Pfam" id="PF03701">
    <property type="entry name" value="UPF0181"/>
    <property type="match status" value="1"/>
</dbReference>
<feature type="chain" id="PRO_0000236632" description="UPF0181 protein YoaH">
    <location>
        <begin position="1"/>
        <end position="59"/>
    </location>
</feature>
<name>YOAH_SALPA</name>
<gene>
    <name evidence="1" type="primary">yoaH</name>
    <name type="ordered locus">SPA1050</name>
</gene>
<organism>
    <name type="scientific">Salmonella paratyphi A (strain ATCC 9150 / SARB42)</name>
    <dbReference type="NCBI Taxonomy" id="295319"/>
    <lineage>
        <taxon>Bacteria</taxon>
        <taxon>Pseudomonadati</taxon>
        <taxon>Pseudomonadota</taxon>
        <taxon>Gammaproteobacteria</taxon>
        <taxon>Enterobacterales</taxon>
        <taxon>Enterobacteriaceae</taxon>
        <taxon>Salmonella</taxon>
    </lineage>
</organism>
<protein>
    <recommendedName>
        <fullName evidence="1">UPF0181 protein YoaH</fullName>
    </recommendedName>
</protein>
<proteinExistence type="inferred from homology"/>
<evidence type="ECO:0000255" key="1">
    <source>
        <dbReference type="HAMAP-Rule" id="MF_00507"/>
    </source>
</evidence>
<sequence>MFAGLPSLSHEQQQKAVERIQELMSQGMSSGEAIAQVAGELRANHTGERIVARFEDEDE</sequence>
<accession>Q5PNL7</accession>
<comment type="similarity">
    <text evidence="1">Belongs to the UPF0181 family.</text>
</comment>
<reference key="1">
    <citation type="journal article" date="2004" name="Nat. Genet.">
        <title>Comparison of genome degradation in Paratyphi A and Typhi, human-restricted serovars of Salmonella enterica that cause typhoid.</title>
        <authorList>
            <person name="McClelland M."/>
            <person name="Sanderson K.E."/>
            <person name="Clifton S.W."/>
            <person name="Latreille P."/>
            <person name="Porwollik S."/>
            <person name="Sabo A."/>
            <person name="Meyer R."/>
            <person name="Bieri T."/>
            <person name="Ozersky P."/>
            <person name="McLellan M."/>
            <person name="Harkins C.R."/>
            <person name="Wang C."/>
            <person name="Nguyen C."/>
            <person name="Berghoff A."/>
            <person name="Elliott G."/>
            <person name="Kohlberg S."/>
            <person name="Strong C."/>
            <person name="Du F."/>
            <person name="Carter J."/>
            <person name="Kremizki C."/>
            <person name="Layman D."/>
            <person name="Leonard S."/>
            <person name="Sun H."/>
            <person name="Fulton L."/>
            <person name="Nash W."/>
            <person name="Miner T."/>
            <person name="Minx P."/>
            <person name="Delehaunty K."/>
            <person name="Fronick C."/>
            <person name="Magrini V."/>
            <person name="Nhan M."/>
            <person name="Warren W."/>
            <person name="Florea L."/>
            <person name="Spieth J."/>
            <person name="Wilson R.K."/>
        </authorList>
    </citation>
    <scope>NUCLEOTIDE SEQUENCE [LARGE SCALE GENOMIC DNA]</scope>
    <source>
        <strain>ATCC 9150 / SARB42</strain>
    </source>
</reference>